<accession>C3L181</accession>
<proteinExistence type="inferred from homology"/>
<sequence length="413" mass="46312">MDFTNLKNTDPELLDMIKKEEERQEYNIELIASENFTSLSVMEAMGSLLTNKYAEGYPHKRYYGGCEFVDEVEDLARERLKKLFAAEHANVQPHSGSQANMAVYMSVLQTGDTILGMDLSHGGHLTHGSPVNFSGKLYNFISYGVDKETETIDYEQLKKIALENRPKMIVSGASAYPRIIDFQKIREICDEIDAYMMVDMAHIAGLVATGLHPSPVPYADFVTTTTHKTLRGPRGGAILCKEKYAKAVDKAIFPGIQGGPLMHTIAAKAVCFGEALREDYKEYMQQVVKNTKVLGEELKNYGFRLISGGTDNHLLLIDLTNKNITGKDAEKLLDSVGITVNKNTIPFETLSPFITSGIRIGTPAVTTRGFKEEEMKKIAYFMNYSIEHREENLSQIKEQIKEICKKYPLHQNA</sequence>
<organism>
    <name type="scientific">Clostridium botulinum (strain 657 / Type Ba4)</name>
    <dbReference type="NCBI Taxonomy" id="515621"/>
    <lineage>
        <taxon>Bacteria</taxon>
        <taxon>Bacillati</taxon>
        <taxon>Bacillota</taxon>
        <taxon>Clostridia</taxon>
        <taxon>Eubacteriales</taxon>
        <taxon>Clostridiaceae</taxon>
        <taxon>Clostridium</taxon>
    </lineage>
</organism>
<dbReference type="EC" id="2.1.2.1" evidence="1"/>
<dbReference type="EMBL" id="CP001083">
    <property type="protein sequence ID" value="ACQ54197.1"/>
    <property type="molecule type" value="Genomic_DNA"/>
</dbReference>
<dbReference type="RefSeq" id="WP_004441711.1">
    <property type="nucleotide sequence ID" value="NC_012658.1"/>
</dbReference>
<dbReference type="SMR" id="C3L181"/>
<dbReference type="KEGG" id="cbi:CLJ_B2825"/>
<dbReference type="HOGENOM" id="CLU_022477_2_1_9"/>
<dbReference type="UniPathway" id="UPA00193"/>
<dbReference type="UniPathway" id="UPA00288">
    <property type="reaction ID" value="UER01023"/>
</dbReference>
<dbReference type="Proteomes" id="UP000002333">
    <property type="component" value="Chromosome"/>
</dbReference>
<dbReference type="GO" id="GO:0005829">
    <property type="term" value="C:cytosol"/>
    <property type="evidence" value="ECO:0007669"/>
    <property type="project" value="TreeGrafter"/>
</dbReference>
<dbReference type="GO" id="GO:0004372">
    <property type="term" value="F:glycine hydroxymethyltransferase activity"/>
    <property type="evidence" value="ECO:0007669"/>
    <property type="project" value="UniProtKB-UniRule"/>
</dbReference>
<dbReference type="GO" id="GO:0030170">
    <property type="term" value="F:pyridoxal phosphate binding"/>
    <property type="evidence" value="ECO:0007669"/>
    <property type="project" value="UniProtKB-UniRule"/>
</dbReference>
<dbReference type="GO" id="GO:0019264">
    <property type="term" value="P:glycine biosynthetic process from serine"/>
    <property type="evidence" value="ECO:0007669"/>
    <property type="project" value="UniProtKB-UniRule"/>
</dbReference>
<dbReference type="GO" id="GO:0035999">
    <property type="term" value="P:tetrahydrofolate interconversion"/>
    <property type="evidence" value="ECO:0007669"/>
    <property type="project" value="UniProtKB-UniRule"/>
</dbReference>
<dbReference type="CDD" id="cd00378">
    <property type="entry name" value="SHMT"/>
    <property type="match status" value="1"/>
</dbReference>
<dbReference type="FunFam" id="3.40.640.10:FF:000001">
    <property type="entry name" value="Serine hydroxymethyltransferase"/>
    <property type="match status" value="1"/>
</dbReference>
<dbReference type="FunFam" id="3.90.1150.10:FF:000003">
    <property type="entry name" value="Serine hydroxymethyltransferase"/>
    <property type="match status" value="1"/>
</dbReference>
<dbReference type="Gene3D" id="3.90.1150.10">
    <property type="entry name" value="Aspartate Aminotransferase, domain 1"/>
    <property type="match status" value="1"/>
</dbReference>
<dbReference type="Gene3D" id="3.40.640.10">
    <property type="entry name" value="Type I PLP-dependent aspartate aminotransferase-like (Major domain)"/>
    <property type="match status" value="1"/>
</dbReference>
<dbReference type="HAMAP" id="MF_00051">
    <property type="entry name" value="SHMT"/>
    <property type="match status" value="1"/>
</dbReference>
<dbReference type="InterPro" id="IPR015424">
    <property type="entry name" value="PyrdxlP-dep_Trfase"/>
</dbReference>
<dbReference type="InterPro" id="IPR015421">
    <property type="entry name" value="PyrdxlP-dep_Trfase_major"/>
</dbReference>
<dbReference type="InterPro" id="IPR015422">
    <property type="entry name" value="PyrdxlP-dep_Trfase_small"/>
</dbReference>
<dbReference type="InterPro" id="IPR001085">
    <property type="entry name" value="Ser_HO-MeTrfase"/>
</dbReference>
<dbReference type="InterPro" id="IPR049943">
    <property type="entry name" value="Ser_HO-MeTrfase-like"/>
</dbReference>
<dbReference type="InterPro" id="IPR019798">
    <property type="entry name" value="Ser_HO-MeTrfase_PLP_BS"/>
</dbReference>
<dbReference type="InterPro" id="IPR039429">
    <property type="entry name" value="SHMT-like_dom"/>
</dbReference>
<dbReference type="NCBIfam" id="NF000586">
    <property type="entry name" value="PRK00011.1"/>
    <property type="match status" value="1"/>
</dbReference>
<dbReference type="PANTHER" id="PTHR11680">
    <property type="entry name" value="SERINE HYDROXYMETHYLTRANSFERASE"/>
    <property type="match status" value="1"/>
</dbReference>
<dbReference type="PANTHER" id="PTHR11680:SF35">
    <property type="entry name" value="SERINE HYDROXYMETHYLTRANSFERASE 1"/>
    <property type="match status" value="1"/>
</dbReference>
<dbReference type="Pfam" id="PF00464">
    <property type="entry name" value="SHMT"/>
    <property type="match status" value="1"/>
</dbReference>
<dbReference type="PIRSF" id="PIRSF000412">
    <property type="entry name" value="SHMT"/>
    <property type="match status" value="1"/>
</dbReference>
<dbReference type="SUPFAM" id="SSF53383">
    <property type="entry name" value="PLP-dependent transferases"/>
    <property type="match status" value="1"/>
</dbReference>
<dbReference type="PROSITE" id="PS00096">
    <property type="entry name" value="SHMT"/>
    <property type="match status" value="1"/>
</dbReference>
<feature type="chain" id="PRO_1000202258" description="Serine hydroxymethyltransferase">
    <location>
        <begin position="1"/>
        <end position="413"/>
    </location>
</feature>
<feature type="binding site" evidence="1">
    <location>
        <position position="119"/>
    </location>
    <ligand>
        <name>(6S)-5,6,7,8-tetrahydrofolate</name>
        <dbReference type="ChEBI" id="CHEBI:57453"/>
    </ligand>
</feature>
<feature type="binding site" evidence="1">
    <location>
        <begin position="123"/>
        <end position="125"/>
    </location>
    <ligand>
        <name>(6S)-5,6,7,8-tetrahydrofolate</name>
        <dbReference type="ChEBI" id="CHEBI:57453"/>
    </ligand>
</feature>
<feature type="binding site" evidence="1">
    <location>
        <begin position="351"/>
        <end position="353"/>
    </location>
    <ligand>
        <name>(6S)-5,6,7,8-tetrahydrofolate</name>
        <dbReference type="ChEBI" id="CHEBI:57453"/>
    </ligand>
</feature>
<feature type="site" description="Plays an important role in substrate specificity" evidence="1">
    <location>
        <position position="227"/>
    </location>
</feature>
<feature type="modified residue" description="N6-(pyridoxal phosphate)lysine" evidence="1">
    <location>
        <position position="228"/>
    </location>
</feature>
<reference key="1">
    <citation type="submission" date="2008-05" db="EMBL/GenBank/DDBJ databases">
        <title>Genome sequence of Clostridium botulinum Ba4 strain 657.</title>
        <authorList>
            <person name="Shrivastava S."/>
            <person name="Brown J.L."/>
            <person name="Bruce D."/>
            <person name="Detter C."/>
            <person name="Munk C."/>
            <person name="Smith L.A."/>
            <person name="Smith T.J."/>
            <person name="Sutton G."/>
            <person name="Brettin T.S."/>
        </authorList>
    </citation>
    <scope>NUCLEOTIDE SEQUENCE [LARGE SCALE GENOMIC DNA]</scope>
    <source>
        <strain>657 / Type Ba4</strain>
    </source>
</reference>
<protein>
    <recommendedName>
        <fullName evidence="1">Serine hydroxymethyltransferase</fullName>
        <shortName evidence="1">SHMT</shortName>
        <shortName evidence="1">Serine methylase</shortName>
        <ecNumber evidence="1">2.1.2.1</ecNumber>
    </recommendedName>
</protein>
<evidence type="ECO:0000255" key="1">
    <source>
        <dbReference type="HAMAP-Rule" id="MF_00051"/>
    </source>
</evidence>
<comment type="function">
    <text evidence="1">Catalyzes the reversible interconversion of serine and glycine with tetrahydrofolate (THF) serving as the one-carbon carrier. This reaction serves as the major source of one-carbon groups required for the biosynthesis of purines, thymidylate, methionine, and other important biomolecules. Also exhibits THF-independent aldolase activity toward beta-hydroxyamino acids, producing glycine and aldehydes, via a retro-aldol mechanism.</text>
</comment>
<comment type="catalytic activity">
    <reaction evidence="1">
        <text>(6R)-5,10-methylene-5,6,7,8-tetrahydrofolate + glycine + H2O = (6S)-5,6,7,8-tetrahydrofolate + L-serine</text>
        <dbReference type="Rhea" id="RHEA:15481"/>
        <dbReference type="ChEBI" id="CHEBI:15377"/>
        <dbReference type="ChEBI" id="CHEBI:15636"/>
        <dbReference type="ChEBI" id="CHEBI:33384"/>
        <dbReference type="ChEBI" id="CHEBI:57305"/>
        <dbReference type="ChEBI" id="CHEBI:57453"/>
        <dbReference type="EC" id="2.1.2.1"/>
    </reaction>
</comment>
<comment type="cofactor">
    <cofactor evidence="1">
        <name>pyridoxal 5'-phosphate</name>
        <dbReference type="ChEBI" id="CHEBI:597326"/>
    </cofactor>
</comment>
<comment type="pathway">
    <text evidence="1">One-carbon metabolism; tetrahydrofolate interconversion.</text>
</comment>
<comment type="pathway">
    <text evidence="1">Amino-acid biosynthesis; glycine biosynthesis; glycine from L-serine: step 1/1.</text>
</comment>
<comment type="subunit">
    <text evidence="1">Homodimer.</text>
</comment>
<comment type="subcellular location">
    <subcellularLocation>
        <location evidence="1">Cytoplasm</location>
    </subcellularLocation>
</comment>
<comment type="similarity">
    <text evidence="1">Belongs to the SHMT family.</text>
</comment>
<name>GLYA_CLOB6</name>
<keyword id="KW-0028">Amino-acid biosynthesis</keyword>
<keyword id="KW-0963">Cytoplasm</keyword>
<keyword id="KW-0554">One-carbon metabolism</keyword>
<keyword id="KW-0663">Pyridoxal phosphate</keyword>
<keyword id="KW-0808">Transferase</keyword>
<gene>
    <name evidence="1" type="primary">glyA</name>
    <name type="ordered locus">CLJ_B2825</name>
</gene>